<keyword id="KW-0256">Endoplasmic reticulum</keyword>
<keyword id="KW-0472">Membrane</keyword>
<keyword id="KW-0509">mRNA transport</keyword>
<keyword id="KW-0906">Nuclear pore complex</keyword>
<keyword id="KW-0539">Nucleus</keyword>
<keyword id="KW-0597">Phosphoprotein</keyword>
<keyword id="KW-0653">Protein transport</keyword>
<keyword id="KW-1185">Reference proteome</keyword>
<keyword id="KW-0677">Repeat</keyword>
<keyword id="KW-0811">Translocation</keyword>
<keyword id="KW-0812">Transmembrane</keyword>
<keyword id="KW-1133">Transmembrane helix</keyword>
<keyword id="KW-0813">Transport</keyword>
<reference key="1">
    <citation type="submission" date="2002-05" db="EMBL/GenBank/DDBJ databases">
        <title>Identification of mouse genes mapping to the Williams syndrome critical region.</title>
        <authorList>
            <person name="Tassabehji M."/>
            <person name="Cunliffe P."/>
        </authorList>
    </citation>
    <scope>NUCLEOTIDE SEQUENCE [MRNA]</scope>
</reference>
<reference key="2">
    <citation type="journal article" date="2004" name="Genome Res.">
        <title>The status, quality, and expansion of the NIH full-length cDNA project: the Mammalian Gene Collection (MGC).</title>
        <authorList>
            <consortium name="The MGC Project Team"/>
        </authorList>
    </citation>
    <scope>NUCLEOTIDE SEQUENCE [LARGE SCALE MRNA]</scope>
    <source>
        <strain>C57BL/6J</strain>
        <tissue>Brain</tissue>
    </source>
</reference>
<reference key="3">
    <citation type="journal article" date="2007" name="Proc. Natl. Acad. Sci. U.S.A.">
        <title>Large-scale phosphorylation analysis of mouse liver.</title>
        <authorList>
            <person name="Villen J."/>
            <person name="Beausoleil S.A."/>
            <person name="Gerber S.A."/>
            <person name="Gygi S.P."/>
        </authorList>
    </citation>
    <scope>PHOSPHORYLATION [LARGE SCALE ANALYSIS] AT SER-319; SER-322; SER-325; SER-408 AND SER-409</scope>
    <scope>IDENTIFICATION BY MASS SPECTROMETRY [LARGE SCALE ANALYSIS]</scope>
    <source>
        <tissue>Liver</tissue>
    </source>
</reference>
<reference key="4">
    <citation type="journal article" date="2010" name="Cell">
        <title>A tissue-specific atlas of mouse protein phosphorylation and expression.</title>
        <authorList>
            <person name="Huttlin E.L."/>
            <person name="Jedrychowski M.P."/>
            <person name="Elias J.E."/>
            <person name="Goswami T."/>
            <person name="Rad R."/>
            <person name="Beausoleil S.A."/>
            <person name="Villen J."/>
            <person name="Haas W."/>
            <person name="Sowa M.E."/>
            <person name="Gygi S.P."/>
        </authorList>
    </citation>
    <scope>PHOSPHORYLATION [LARGE SCALE ANALYSIS] AT SER-244; SER-319; SER-322; SER-325; SER-370; SER-409; SER-412; SER-413; SER-416 AND SER-417</scope>
    <scope>IDENTIFICATION BY MASS SPECTROMETRY [LARGE SCALE ANALYSIS]</scope>
    <source>
        <tissue>Brain</tissue>
        <tissue>Brown adipose tissue</tissue>
        <tissue>Kidney</tissue>
        <tissue>Liver</tissue>
        <tissue>Lung</tissue>
        <tissue>Pancreas</tissue>
        <tissue>Spleen</tissue>
        <tissue>Testis</tissue>
    </source>
</reference>
<dbReference type="EMBL" id="AF516680">
    <property type="protein sequence ID" value="AAM64199.1"/>
    <property type="molecule type" value="mRNA"/>
</dbReference>
<dbReference type="EMBL" id="BC053101">
    <property type="protein sequence ID" value="AAH53101.1"/>
    <property type="molecule type" value="mRNA"/>
</dbReference>
<dbReference type="CCDS" id="CCDS51662.1"/>
<dbReference type="RefSeq" id="NP_683734.2">
    <property type="nucleotide sequence ID" value="NM_148932.2"/>
</dbReference>
<dbReference type="SMR" id="Q8K3Z9"/>
<dbReference type="BioGRID" id="223706">
    <property type="interactions" value="3"/>
</dbReference>
<dbReference type="ComplexPortal" id="CPX-4474">
    <property type="entry name" value="Nuclear pore complex"/>
</dbReference>
<dbReference type="FunCoup" id="Q8K3Z9">
    <property type="interactions" value="3082"/>
</dbReference>
<dbReference type="STRING" id="10090.ENSMUSP00000106801"/>
<dbReference type="GlyGen" id="Q8K3Z9">
    <property type="glycosylation" value="22 sites, 1 N-linked glycan (1 site), 1 O-linked glycan (15 sites)"/>
</dbReference>
<dbReference type="iPTMnet" id="Q8K3Z9"/>
<dbReference type="PhosphoSitePlus" id="Q8K3Z9"/>
<dbReference type="SwissPalm" id="Q8K3Z9"/>
<dbReference type="jPOST" id="Q8K3Z9"/>
<dbReference type="PaxDb" id="10090-ENSMUSP00000106801"/>
<dbReference type="ProteomicsDB" id="289468"/>
<dbReference type="Pumba" id="Q8K3Z9"/>
<dbReference type="Ensembl" id="ENSMUST00000111171.6">
    <property type="protein sequence ID" value="ENSMUSP00000106801.3"/>
    <property type="gene ID" value="ENSMUSG00000053293.10"/>
</dbReference>
<dbReference type="GeneID" id="107939"/>
<dbReference type="KEGG" id="mmu:107939"/>
<dbReference type="UCSC" id="uc008zyi.1">
    <property type="organism name" value="mouse"/>
</dbReference>
<dbReference type="AGR" id="MGI:2137624"/>
<dbReference type="CTD" id="9883"/>
<dbReference type="MGI" id="MGI:2137624">
    <property type="gene designation" value="Pom121"/>
</dbReference>
<dbReference type="VEuPathDB" id="HostDB:ENSMUSG00000053293"/>
<dbReference type="eggNOG" id="ENOG502R5GW">
    <property type="taxonomic scope" value="Eukaryota"/>
</dbReference>
<dbReference type="GeneTree" id="ENSGT00940000153253"/>
<dbReference type="HOGENOM" id="CLU_011366_0_0_1"/>
<dbReference type="InParanoid" id="Q8K3Z9"/>
<dbReference type="OMA" id="VCCIVCY"/>
<dbReference type="OrthoDB" id="6510268at2759"/>
<dbReference type="PhylomeDB" id="Q8K3Z9"/>
<dbReference type="TreeFam" id="TF323517"/>
<dbReference type="Reactome" id="R-MMU-159227">
    <property type="pathway name" value="Transport of the SLBP independent Mature mRNA"/>
</dbReference>
<dbReference type="Reactome" id="R-MMU-159230">
    <property type="pathway name" value="Transport of the SLBP Dependant Mature mRNA"/>
</dbReference>
<dbReference type="Reactome" id="R-MMU-159231">
    <property type="pathway name" value="Transport of Mature mRNA Derived from an Intronless Transcript"/>
</dbReference>
<dbReference type="Reactome" id="R-MMU-159236">
    <property type="pathway name" value="Transport of Mature mRNA derived from an Intron-Containing Transcript"/>
</dbReference>
<dbReference type="Reactome" id="R-MMU-170822">
    <property type="pathway name" value="Regulation of Glucokinase by Glucokinase Regulatory Protein"/>
</dbReference>
<dbReference type="Reactome" id="R-MMU-191859">
    <property type="pathway name" value="snRNP Assembly"/>
</dbReference>
<dbReference type="Reactome" id="R-MMU-3108214">
    <property type="pathway name" value="SUMOylation of DNA damage response and repair proteins"/>
</dbReference>
<dbReference type="Reactome" id="R-MMU-3232142">
    <property type="pathway name" value="SUMOylation of ubiquitinylation proteins"/>
</dbReference>
<dbReference type="Reactome" id="R-MMU-3301854">
    <property type="pathway name" value="Nuclear Pore Complex (NPC) Disassembly"/>
</dbReference>
<dbReference type="Reactome" id="R-MMU-3371453">
    <property type="pathway name" value="Regulation of HSF1-mediated heat shock response"/>
</dbReference>
<dbReference type="Reactome" id="R-MMU-4085377">
    <property type="pathway name" value="SUMOylation of SUMOylation proteins"/>
</dbReference>
<dbReference type="Reactome" id="R-MMU-4551638">
    <property type="pathway name" value="SUMOylation of chromatin organization proteins"/>
</dbReference>
<dbReference type="Reactome" id="R-MMU-4570464">
    <property type="pathway name" value="SUMOylation of RNA binding proteins"/>
</dbReference>
<dbReference type="Reactome" id="R-MMU-4615885">
    <property type="pathway name" value="SUMOylation of DNA replication proteins"/>
</dbReference>
<dbReference type="Reactome" id="R-MMU-5578749">
    <property type="pathway name" value="Transcriptional regulation by small RNAs"/>
</dbReference>
<dbReference type="Reactome" id="R-MMU-9615933">
    <property type="pathway name" value="Postmitotic nuclear pore complex (NPC) reformation"/>
</dbReference>
<dbReference type="BioGRID-ORCS" id="107939">
    <property type="hits" value="5 hits in 78 CRISPR screens"/>
</dbReference>
<dbReference type="ChiTaRS" id="Pom121">
    <property type="organism name" value="mouse"/>
</dbReference>
<dbReference type="PRO" id="PR:Q8K3Z9"/>
<dbReference type="Proteomes" id="UP000000589">
    <property type="component" value="Chromosome 5"/>
</dbReference>
<dbReference type="RNAct" id="Q8K3Z9">
    <property type="molecule type" value="protein"/>
</dbReference>
<dbReference type="Bgee" id="ENSMUSG00000053293">
    <property type="expression patterns" value="Expressed in respiratory primordium and 246 other cell types or tissues"/>
</dbReference>
<dbReference type="ExpressionAtlas" id="Q8K3Z9">
    <property type="expression patterns" value="baseline and differential"/>
</dbReference>
<dbReference type="GO" id="GO:0005789">
    <property type="term" value="C:endoplasmic reticulum membrane"/>
    <property type="evidence" value="ECO:0007669"/>
    <property type="project" value="UniProtKB-SubCell"/>
</dbReference>
<dbReference type="GO" id="GO:0005635">
    <property type="term" value="C:nuclear envelope"/>
    <property type="evidence" value="ECO:0000266"/>
    <property type="project" value="ComplexPortal"/>
</dbReference>
<dbReference type="GO" id="GO:0031965">
    <property type="term" value="C:nuclear membrane"/>
    <property type="evidence" value="ECO:0007669"/>
    <property type="project" value="UniProtKB-SubCell"/>
</dbReference>
<dbReference type="GO" id="GO:0005643">
    <property type="term" value="C:nuclear pore"/>
    <property type="evidence" value="ECO:0000303"/>
    <property type="project" value="ComplexPortal"/>
</dbReference>
<dbReference type="GO" id="GO:0051028">
    <property type="term" value="P:mRNA transport"/>
    <property type="evidence" value="ECO:0007669"/>
    <property type="project" value="UniProtKB-KW"/>
</dbReference>
<dbReference type="GO" id="GO:0006913">
    <property type="term" value="P:nucleocytoplasmic transport"/>
    <property type="evidence" value="ECO:0000303"/>
    <property type="project" value="ComplexPortal"/>
</dbReference>
<dbReference type="GO" id="GO:0015031">
    <property type="term" value="P:protein transport"/>
    <property type="evidence" value="ECO:0007669"/>
    <property type="project" value="UniProtKB-KW"/>
</dbReference>
<dbReference type="InterPro" id="IPR026054">
    <property type="entry name" value="Nucleoporin"/>
</dbReference>
<dbReference type="PANTHER" id="PTHR23193:SF5">
    <property type="entry name" value="NUCLEAR ENVELOPE PORE MEMBRANE PROTEIN POM 121C-RELATED"/>
    <property type="match status" value="1"/>
</dbReference>
<dbReference type="PANTHER" id="PTHR23193">
    <property type="entry name" value="NUCLEAR PORE COMPLEX PROTEIN NUP"/>
    <property type="match status" value="1"/>
</dbReference>
<dbReference type="Pfam" id="PF15229">
    <property type="entry name" value="POM121"/>
    <property type="match status" value="1"/>
</dbReference>
<accession>Q8K3Z9</accession>
<accession>Q7TSH5</accession>
<name>PO121_MOUSE</name>
<proteinExistence type="evidence at protein level"/>
<evidence type="ECO:0000250" key="1"/>
<evidence type="ECO:0000250" key="2">
    <source>
        <dbReference type="UniProtKB" id="A8CG34"/>
    </source>
</evidence>
<evidence type="ECO:0000250" key="3">
    <source>
        <dbReference type="UniProtKB" id="P52591"/>
    </source>
</evidence>
<evidence type="ECO:0000250" key="4">
    <source>
        <dbReference type="UniProtKB" id="Q96HA1"/>
    </source>
</evidence>
<evidence type="ECO:0000255" key="5"/>
<evidence type="ECO:0000256" key="6">
    <source>
        <dbReference type="SAM" id="MobiDB-lite"/>
    </source>
</evidence>
<evidence type="ECO:0000305" key="7"/>
<evidence type="ECO:0007744" key="8">
    <source>
    </source>
</evidence>
<evidence type="ECO:0007744" key="9">
    <source>
    </source>
</evidence>
<sequence>MSPAAAAADGGERRRPPLGGREGRSRARGYGGPAGAAALGLALLGLALYLVPAAAALAWLAVGASAAWWGLSREPRGPRALSSFVRDARRHPRPALTASPPPAKSPVNGSLCEPRSPLGGPDPAELLLMGSYLGKPGPPEPALRQDPRERPGRRPPARSPPPASAVQRVHHVYPALPTPLLRPSRRPPHRDCGPLSSRFVITPRRRYPIQQAQYSLLGALPTVCWNGGHKKAVLSPRNSRMVCSPVTVRIAPPDSKLFRSSMSEQILDTTLSSPSSNAPDPCAKETVLNALKEKKKRTVAEEDQLHLDGQENKRRRHDSGGSGHSAFEPLVANGVPAAFVPKPGSLKRSLASQSSDDHLNKRSRTSSVSSLASACTGGIPSSSRNAITSSYSSTRGISQLWKRSGPTSSPFSSPASSRSQTPERPAKKTREEEPCQQSSSSPPLVTDKESPGEKVTDTTTGKQQSSWTSPPTPGSSGQRKRKIQLLPSRRGDQLTLPPPPELGYSITAEDLDMERKASLQWFNKVLEDKPDDASASATDGPPSTSPPFTFTLPAVGPAASPASLPAPSSNPLLESLKKMQESPAPSSSEPAEAATVAAPSPPKTPSLLAPLVSPLAGPLASTSSDSKPAATFLGLASASSITPLTDSKSSGVSQAEQSVSTPASTASSPTPKPSMLFGMLSPPASSSSLATPAPACASPMFKPIFPATPKSESDSPLPSSSSAATTASSSTAPPTAASTTPTFKPIFDKMEPFTAMPLSTPFSLKQTTATATTTATSAPLFTGLGTATSTVASGTAASASKPVFGFGVTTAASTASSTMTSTSQSVLFGGAPPVTTSSSAPALASIFQFGKPLAPAASAAGTSFSQPLASSTQTAASNSGFSGFGSTLTTSTSAPATTSQPTLTFSNTVTPTFNIPFSSSAKPALPTYPGANSQPTFGATDGATKPALAPSFGSSFTFGNSVASAPSAAPAPATFGSAAQPAFGGLKAAASTFGAPASTQPAFGSTTSVFSFGSATTSGFGAAATAATTTQTTNSGSSSSLFGSSAPSPFTFGGSAAPAGSGGFGLSATPGTSSTSGTFSFGSGQSGTPGTTTSFGSLSQNTLGAPSQGSPFAFSVGSTPESKPVFGGTSTPTFGQSAPAPGVGTTGSSLSFGASSTPAQGFVGVGPFGSAAPSFSIGAGSKTPGARQRLQARRQHTRKK</sequence>
<protein>
    <recommendedName>
        <fullName>Nuclear envelope pore membrane protein POM 121</fullName>
    </recommendedName>
    <alternativeName>
        <fullName>Nucleoporin Nup121</fullName>
    </alternativeName>
    <alternativeName>
        <fullName>Pore membrane protein of 121 kDa</fullName>
    </alternativeName>
</protein>
<comment type="function">
    <text evidence="1">Essential component of the nuclear pore complex (NPC). The repeat-containing domain may be involved in anchoring components of the pore complex to the pore membrane. When overexpressed in cells induces the formation of cytoplasmic annulate lamellae (AL) (By similarity).</text>
</comment>
<comment type="subcellular location">
    <subcellularLocation>
        <location evidence="1">Nucleus</location>
        <location evidence="1">Nuclear pore complex</location>
    </subcellularLocation>
    <subcellularLocation>
        <location evidence="1">Nucleus membrane</location>
        <topology evidence="1">Single-pass membrane protein</topology>
    </subcellularLocation>
    <subcellularLocation>
        <location evidence="1">Endoplasmic reticulum membrane</location>
        <topology evidence="1">Single-pass membrane protein</topology>
    </subcellularLocation>
    <text evidence="1">Stably associated with the NPC throughout interphase and the endoplasmic reticulum during metaphase.</text>
</comment>
<comment type="domain">
    <text>Contains F-X-F-G repeats.</text>
</comment>
<comment type="PTM">
    <text evidence="1">Proteolytically cleaved by caspase-3 during apoptosis.</text>
</comment>
<comment type="similarity">
    <text evidence="7">Belongs to the POM121 family.</text>
</comment>
<gene>
    <name type="primary">Pom121</name>
    <name type="synonym">Nup121</name>
</gene>
<organism>
    <name type="scientific">Mus musculus</name>
    <name type="common">Mouse</name>
    <dbReference type="NCBI Taxonomy" id="10090"/>
    <lineage>
        <taxon>Eukaryota</taxon>
        <taxon>Metazoa</taxon>
        <taxon>Chordata</taxon>
        <taxon>Craniata</taxon>
        <taxon>Vertebrata</taxon>
        <taxon>Euteleostomi</taxon>
        <taxon>Mammalia</taxon>
        <taxon>Eutheria</taxon>
        <taxon>Euarchontoglires</taxon>
        <taxon>Glires</taxon>
        <taxon>Rodentia</taxon>
        <taxon>Myomorpha</taxon>
        <taxon>Muroidea</taxon>
        <taxon>Muridae</taxon>
        <taxon>Murinae</taxon>
        <taxon>Mus</taxon>
        <taxon>Mus</taxon>
    </lineage>
</organism>
<feature type="chain" id="PRO_0000204907" description="Nuclear envelope pore membrane protein POM 121">
    <location>
        <begin position="1"/>
        <end position="1200"/>
    </location>
</feature>
<feature type="transmembrane region" description="Helical" evidence="5">
    <location>
        <begin position="57"/>
        <end position="77"/>
    </location>
</feature>
<feature type="region of interest" description="Cisternal side" evidence="5">
    <location>
        <begin position="1"/>
        <end position="56"/>
    </location>
</feature>
<feature type="region of interest" description="Disordered" evidence="6">
    <location>
        <begin position="1"/>
        <end position="29"/>
    </location>
</feature>
<feature type="region of interest" description="Pore side" evidence="5">
    <location>
        <begin position="76"/>
        <end position="1200"/>
    </location>
</feature>
<feature type="region of interest" description="Disordered" evidence="6">
    <location>
        <begin position="91"/>
        <end position="167"/>
    </location>
</feature>
<feature type="region of interest" description="Disordered" evidence="6">
    <location>
        <begin position="177"/>
        <end position="196"/>
    </location>
</feature>
<feature type="region of interest" description="Disordered" evidence="6">
    <location>
        <begin position="294"/>
        <end position="328"/>
    </location>
</feature>
<feature type="region of interest" description="Disordered" evidence="6">
    <location>
        <begin position="345"/>
        <end position="509"/>
    </location>
</feature>
<feature type="region of interest" description="Disordered" evidence="6">
    <location>
        <begin position="530"/>
        <end position="627"/>
    </location>
</feature>
<feature type="region of interest" description="Disordered" evidence="6">
    <location>
        <begin position="640"/>
        <end position="692"/>
    </location>
</feature>
<feature type="region of interest" description="Disordered" evidence="6">
    <location>
        <begin position="706"/>
        <end position="744"/>
    </location>
</feature>
<feature type="region of interest" description="Disordered" evidence="6">
    <location>
        <begin position="1075"/>
        <end position="1151"/>
    </location>
</feature>
<feature type="region of interest" description="Disordered" evidence="6">
    <location>
        <begin position="1173"/>
        <end position="1200"/>
    </location>
</feature>
<feature type="compositionally biased region" description="Basic and acidic residues" evidence="6">
    <location>
        <begin position="10"/>
        <end position="25"/>
    </location>
</feature>
<feature type="compositionally biased region" description="Basic and acidic residues" evidence="6">
    <location>
        <begin position="143"/>
        <end position="152"/>
    </location>
</feature>
<feature type="compositionally biased region" description="Basic and acidic residues" evidence="6">
    <location>
        <begin position="298"/>
        <end position="312"/>
    </location>
</feature>
<feature type="compositionally biased region" description="Low complexity" evidence="6">
    <location>
        <begin position="365"/>
        <end position="374"/>
    </location>
</feature>
<feature type="compositionally biased region" description="Polar residues" evidence="6">
    <location>
        <begin position="379"/>
        <end position="397"/>
    </location>
</feature>
<feature type="compositionally biased region" description="Low complexity" evidence="6">
    <location>
        <begin position="404"/>
        <end position="419"/>
    </location>
</feature>
<feature type="compositionally biased region" description="Basic and acidic residues" evidence="6">
    <location>
        <begin position="424"/>
        <end position="433"/>
    </location>
</feature>
<feature type="compositionally biased region" description="Basic and acidic residues" evidence="6">
    <location>
        <begin position="446"/>
        <end position="456"/>
    </location>
</feature>
<feature type="compositionally biased region" description="Low complexity" evidence="6">
    <location>
        <begin position="463"/>
        <end position="477"/>
    </location>
</feature>
<feature type="compositionally biased region" description="Low complexity" evidence="6">
    <location>
        <begin position="546"/>
        <end position="574"/>
    </location>
</feature>
<feature type="compositionally biased region" description="Low complexity" evidence="6">
    <location>
        <begin position="581"/>
        <end position="598"/>
    </location>
</feature>
<feature type="compositionally biased region" description="Low complexity" evidence="6">
    <location>
        <begin position="605"/>
        <end position="621"/>
    </location>
</feature>
<feature type="compositionally biased region" description="Polar residues" evidence="6">
    <location>
        <begin position="640"/>
        <end position="657"/>
    </location>
</feature>
<feature type="compositionally biased region" description="Low complexity" evidence="6">
    <location>
        <begin position="658"/>
        <end position="669"/>
    </location>
</feature>
<feature type="compositionally biased region" description="Low complexity" evidence="6">
    <location>
        <begin position="681"/>
        <end position="692"/>
    </location>
</feature>
<feature type="compositionally biased region" description="Low complexity" evidence="6">
    <location>
        <begin position="715"/>
        <end position="742"/>
    </location>
</feature>
<feature type="compositionally biased region" description="Low complexity" evidence="6">
    <location>
        <begin position="1075"/>
        <end position="1099"/>
    </location>
</feature>
<feature type="compositionally biased region" description="Polar residues" evidence="6">
    <location>
        <begin position="1100"/>
        <end position="1121"/>
    </location>
</feature>
<feature type="compositionally biased region" description="Basic residues" evidence="6">
    <location>
        <begin position="1190"/>
        <end position="1200"/>
    </location>
</feature>
<feature type="site" description="Cleavage; by caspase-3" evidence="1">
    <location>
        <begin position="531"/>
        <end position="532"/>
    </location>
</feature>
<feature type="modified residue" description="Phosphoserine" evidence="2">
    <location>
        <position position="83"/>
    </location>
</feature>
<feature type="modified residue" description="Phosphoserine" evidence="9">
    <location>
        <position position="244"/>
    </location>
</feature>
<feature type="modified residue" description="Phosphoserine" evidence="8 9">
    <location>
        <position position="319"/>
    </location>
</feature>
<feature type="modified residue" description="Phosphoserine" evidence="8 9">
    <location>
        <position position="322"/>
    </location>
</feature>
<feature type="modified residue" description="Phosphoserine" evidence="8 9">
    <location>
        <position position="325"/>
    </location>
</feature>
<feature type="modified residue" description="Phosphoserine" evidence="4">
    <location>
        <position position="345"/>
    </location>
</feature>
<feature type="modified residue" description="Phosphoserine" evidence="3">
    <location>
        <position position="355"/>
    </location>
</feature>
<feature type="modified residue" description="Phosphoserine" evidence="2">
    <location>
        <position position="367"/>
    </location>
</feature>
<feature type="modified residue" description="Phosphoserine" evidence="9">
    <location>
        <position position="370"/>
    </location>
</feature>
<feature type="modified residue" description="Phosphoserine" evidence="8">
    <location>
        <position position="408"/>
    </location>
</feature>
<feature type="modified residue" description="Phosphoserine" evidence="8 9">
    <location>
        <position position="409"/>
    </location>
</feature>
<feature type="modified residue" description="Phosphoserine" evidence="9">
    <location>
        <position position="412"/>
    </location>
</feature>
<feature type="modified residue" description="Phosphoserine" evidence="9">
    <location>
        <position position="413"/>
    </location>
</feature>
<feature type="modified residue" description="Phosphoserine" evidence="9">
    <location>
        <position position="416"/>
    </location>
</feature>
<feature type="modified residue" description="Phosphoserine" evidence="9">
    <location>
        <position position="417"/>
    </location>
</feature>
<feature type="sequence conflict" description="In Ref. 1; AAM64199." evidence="7" ref="1">
    <location>
        <position position="500"/>
    </location>
</feature>